<dbReference type="EC" id="3.2.2.27" evidence="1"/>
<dbReference type="EMBL" id="CP000153">
    <property type="protein sequence ID" value="ABB44839.1"/>
    <property type="molecule type" value="Genomic_DNA"/>
</dbReference>
<dbReference type="RefSeq" id="WP_011373191.1">
    <property type="nucleotide sequence ID" value="NC_007575.1"/>
</dbReference>
<dbReference type="SMR" id="Q30Q92"/>
<dbReference type="STRING" id="326298.Suden_1562"/>
<dbReference type="KEGG" id="tdn:Suden_1562"/>
<dbReference type="eggNOG" id="COG0692">
    <property type="taxonomic scope" value="Bacteria"/>
</dbReference>
<dbReference type="HOGENOM" id="CLU_032162_3_0_7"/>
<dbReference type="OrthoDB" id="9804372at2"/>
<dbReference type="Proteomes" id="UP000002714">
    <property type="component" value="Chromosome"/>
</dbReference>
<dbReference type="GO" id="GO:0005737">
    <property type="term" value="C:cytoplasm"/>
    <property type="evidence" value="ECO:0007669"/>
    <property type="project" value="UniProtKB-SubCell"/>
</dbReference>
<dbReference type="GO" id="GO:0004844">
    <property type="term" value="F:uracil DNA N-glycosylase activity"/>
    <property type="evidence" value="ECO:0007669"/>
    <property type="project" value="UniProtKB-UniRule"/>
</dbReference>
<dbReference type="GO" id="GO:0097510">
    <property type="term" value="P:base-excision repair, AP site formation via deaminated base removal"/>
    <property type="evidence" value="ECO:0007669"/>
    <property type="project" value="TreeGrafter"/>
</dbReference>
<dbReference type="CDD" id="cd10027">
    <property type="entry name" value="UDG-F1-like"/>
    <property type="match status" value="1"/>
</dbReference>
<dbReference type="FunFam" id="3.40.470.10:FF:000001">
    <property type="entry name" value="Uracil-DNA glycosylase"/>
    <property type="match status" value="1"/>
</dbReference>
<dbReference type="Gene3D" id="3.40.470.10">
    <property type="entry name" value="Uracil-DNA glycosylase-like domain"/>
    <property type="match status" value="1"/>
</dbReference>
<dbReference type="HAMAP" id="MF_00148">
    <property type="entry name" value="UDG"/>
    <property type="match status" value="1"/>
</dbReference>
<dbReference type="InterPro" id="IPR002043">
    <property type="entry name" value="UDG_fam1"/>
</dbReference>
<dbReference type="InterPro" id="IPR018085">
    <property type="entry name" value="Ura-DNA_Glyclase_AS"/>
</dbReference>
<dbReference type="InterPro" id="IPR005122">
    <property type="entry name" value="Uracil-DNA_glycosylase-like"/>
</dbReference>
<dbReference type="InterPro" id="IPR036895">
    <property type="entry name" value="Uracil-DNA_glycosylase-like_sf"/>
</dbReference>
<dbReference type="NCBIfam" id="NF003588">
    <property type="entry name" value="PRK05254.1-1"/>
    <property type="match status" value="1"/>
</dbReference>
<dbReference type="NCBIfam" id="NF003589">
    <property type="entry name" value="PRK05254.1-2"/>
    <property type="match status" value="1"/>
</dbReference>
<dbReference type="NCBIfam" id="NF003591">
    <property type="entry name" value="PRK05254.1-4"/>
    <property type="match status" value="1"/>
</dbReference>
<dbReference type="NCBIfam" id="NF003592">
    <property type="entry name" value="PRK05254.1-5"/>
    <property type="match status" value="1"/>
</dbReference>
<dbReference type="NCBIfam" id="TIGR00628">
    <property type="entry name" value="ung"/>
    <property type="match status" value="1"/>
</dbReference>
<dbReference type="PANTHER" id="PTHR11264">
    <property type="entry name" value="URACIL-DNA GLYCOSYLASE"/>
    <property type="match status" value="1"/>
</dbReference>
<dbReference type="PANTHER" id="PTHR11264:SF0">
    <property type="entry name" value="URACIL-DNA GLYCOSYLASE"/>
    <property type="match status" value="1"/>
</dbReference>
<dbReference type="Pfam" id="PF03167">
    <property type="entry name" value="UDG"/>
    <property type="match status" value="1"/>
</dbReference>
<dbReference type="SMART" id="SM00986">
    <property type="entry name" value="UDG"/>
    <property type="match status" value="1"/>
</dbReference>
<dbReference type="SMART" id="SM00987">
    <property type="entry name" value="UreE_C"/>
    <property type="match status" value="1"/>
</dbReference>
<dbReference type="SUPFAM" id="SSF52141">
    <property type="entry name" value="Uracil-DNA glycosylase-like"/>
    <property type="match status" value="1"/>
</dbReference>
<dbReference type="PROSITE" id="PS00130">
    <property type="entry name" value="U_DNA_GLYCOSYLASE"/>
    <property type="match status" value="1"/>
</dbReference>
<gene>
    <name evidence="1" type="primary">ung</name>
    <name type="ordered locus">Suden_1562</name>
</gene>
<comment type="function">
    <text evidence="1">Excises uracil residues from the DNA which can arise as a result of misincorporation of dUMP residues by DNA polymerase or due to deamination of cytosine.</text>
</comment>
<comment type="catalytic activity">
    <reaction evidence="1">
        <text>Hydrolyzes single-stranded DNA or mismatched double-stranded DNA and polynucleotides, releasing free uracil.</text>
        <dbReference type="EC" id="3.2.2.27"/>
    </reaction>
</comment>
<comment type="subcellular location">
    <subcellularLocation>
        <location evidence="1">Cytoplasm</location>
    </subcellularLocation>
</comment>
<comment type="similarity">
    <text evidence="1">Belongs to the uracil-DNA glycosylase (UDG) superfamily. UNG family.</text>
</comment>
<proteinExistence type="inferred from homology"/>
<keyword id="KW-0963">Cytoplasm</keyword>
<keyword id="KW-0227">DNA damage</keyword>
<keyword id="KW-0234">DNA repair</keyword>
<keyword id="KW-0378">Hydrolase</keyword>
<keyword id="KW-1185">Reference proteome</keyword>
<protein>
    <recommendedName>
        <fullName evidence="1">Uracil-DNA glycosylase</fullName>
        <shortName evidence="1">UDG</shortName>
        <ecNumber evidence="1">3.2.2.27</ecNumber>
    </recommendedName>
</protein>
<accession>Q30Q92</accession>
<name>UNG_SULDN</name>
<sequence length="223" mass="25054">MIDLKIESSWREVLLDEFQKPYFNSLKEFLVGEKQKYTLYPHSSNIFAAFESTPFESVKVVILGQDPYHGVNQAHGLAFSVNDGVPPPPSLCNIFKELHDDIGCEIPKSGNLMSWAKEGVFLLNTVLSVRASEANSHKNRGWEVFTDTVIRLLSEKKENLVFILWGAPAGAKASLIDEKKHLILKAPHPSPLSSYRGFFGSKPFSKTDEYLISKGLKPVEWCI</sequence>
<feature type="chain" id="PRO_1000009960" description="Uracil-DNA glycosylase">
    <location>
        <begin position="1"/>
        <end position="223"/>
    </location>
</feature>
<feature type="active site" description="Proton acceptor" evidence="1">
    <location>
        <position position="66"/>
    </location>
</feature>
<evidence type="ECO:0000255" key="1">
    <source>
        <dbReference type="HAMAP-Rule" id="MF_00148"/>
    </source>
</evidence>
<reference key="1">
    <citation type="journal article" date="2008" name="Appl. Environ. Microbiol.">
        <title>Genome of the epsilonproteobacterial chemolithoautotroph Sulfurimonas denitrificans.</title>
        <authorList>
            <person name="Sievert S.M."/>
            <person name="Scott K.M."/>
            <person name="Klotz M.G."/>
            <person name="Chain P.S.G."/>
            <person name="Hauser L.J."/>
            <person name="Hemp J."/>
            <person name="Huegler M."/>
            <person name="Land M."/>
            <person name="Lapidus A."/>
            <person name="Larimer F.W."/>
            <person name="Lucas S."/>
            <person name="Malfatti S.A."/>
            <person name="Meyer F."/>
            <person name="Paulsen I.T."/>
            <person name="Ren Q."/>
            <person name="Simon J."/>
            <person name="Bailey K."/>
            <person name="Diaz E."/>
            <person name="Fitzpatrick K.A."/>
            <person name="Glover B."/>
            <person name="Gwatney N."/>
            <person name="Korajkic A."/>
            <person name="Long A."/>
            <person name="Mobberley J.M."/>
            <person name="Pantry S.N."/>
            <person name="Pazder G."/>
            <person name="Peterson S."/>
            <person name="Quintanilla J.D."/>
            <person name="Sprinkle R."/>
            <person name="Stephens J."/>
            <person name="Thomas P."/>
            <person name="Vaughn R."/>
            <person name="Weber M.J."/>
            <person name="Wooten L.L."/>
        </authorList>
    </citation>
    <scope>NUCLEOTIDE SEQUENCE [LARGE SCALE GENOMIC DNA]</scope>
    <source>
        <strain>ATCC 33889 / DSM 1251</strain>
    </source>
</reference>
<organism>
    <name type="scientific">Sulfurimonas denitrificans (strain ATCC 33889 / DSM 1251)</name>
    <name type="common">Thiomicrospira denitrificans (strain ATCC 33889 / DSM 1251)</name>
    <dbReference type="NCBI Taxonomy" id="326298"/>
    <lineage>
        <taxon>Bacteria</taxon>
        <taxon>Pseudomonadati</taxon>
        <taxon>Campylobacterota</taxon>
        <taxon>Epsilonproteobacteria</taxon>
        <taxon>Campylobacterales</taxon>
        <taxon>Sulfurimonadaceae</taxon>
        <taxon>Sulfurimonas</taxon>
    </lineage>
</organism>